<sequence length="129" mass="14539">MLHLHILSWVLAIILFIATYLNISKNQGRSPFFKPLHMILRLFMLLTLISGFWILIQSFMNGGANHMLLTLKMLCGVAVVGLMEVSIAKRKRHEQSHTMFWITIALIIITMVLGVILPLGPISKLFGIG</sequence>
<organism>
    <name type="scientific">Staphylococcus aureus (strain COL)</name>
    <dbReference type="NCBI Taxonomy" id="93062"/>
    <lineage>
        <taxon>Bacteria</taxon>
        <taxon>Bacillati</taxon>
        <taxon>Bacillota</taxon>
        <taxon>Bacilli</taxon>
        <taxon>Bacillales</taxon>
        <taxon>Staphylococcaceae</taxon>
        <taxon>Staphylococcus</taxon>
    </lineage>
</organism>
<comment type="subcellular location">
    <subcellularLocation>
        <location evidence="1">Cell membrane</location>
        <topology evidence="1">Multi-pass membrane protein</topology>
    </subcellularLocation>
</comment>
<comment type="similarity">
    <text evidence="1">Belongs to the UPF0344 family.</text>
</comment>
<name>Y974_STAAC</name>
<proteinExistence type="inferred from homology"/>
<evidence type="ECO:0000255" key="1">
    <source>
        <dbReference type="HAMAP-Rule" id="MF_01536"/>
    </source>
</evidence>
<accession>Q5HHB5</accession>
<feature type="chain" id="PRO_0000105893" description="UPF0344 protein SACOL0974">
    <location>
        <begin position="1"/>
        <end position="129"/>
    </location>
</feature>
<feature type="transmembrane region" description="Helical" evidence="1">
    <location>
        <begin position="1"/>
        <end position="21"/>
    </location>
</feature>
<feature type="transmembrane region" description="Helical" evidence="1">
    <location>
        <begin position="36"/>
        <end position="56"/>
    </location>
</feature>
<feature type="transmembrane region" description="Helical" evidence="1">
    <location>
        <begin position="67"/>
        <end position="87"/>
    </location>
</feature>
<feature type="transmembrane region" description="Helical" evidence="1">
    <location>
        <begin position="99"/>
        <end position="119"/>
    </location>
</feature>
<reference key="1">
    <citation type="journal article" date="2005" name="J. Bacteriol.">
        <title>Insights on evolution of virulence and resistance from the complete genome analysis of an early methicillin-resistant Staphylococcus aureus strain and a biofilm-producing methicillin-resistant Staphylococcus epidermidis strain.</title>
        <authorList>
            <person name="Gill S.R."/>
            <person name="Fouts D.E."/>
            <person name="Archer G.L."/>
            <person name="Mongodin E.F."/>
            <person name="DeBoy R.T."/>
            <person name="Ravel J."/>
            <person name="Paulsen I.T."/>
            <person name="Kolonay J.F."/>
            <person name="Brinkac L.M."/>
            <person name="Beanan M.J."/>
            <person name="Dodson R.J."/>
            <person name="Daugherty S.C."/>
            <person name="Madupu R."/>
            <person name="Angiuoli S.V."/>
            <person name="Durkin A.S."/>
            <person name="Haft D.H."/>
            <person name="Vamathevan J.J."/>
            <person name="Khouri H."/>
            <person name="Utterback T.R."/>
            <person name="Lee C."/>
            <person name="Dimitrov G."/>
            <person name="Jiang L."/>
            <person name="Qin H."/>
            <person name="Weidman J."/>
            <person name="Tran K."/>
            <person name="Kang K.H."/>
            <person name="Hance I.R."/>
            <person name="Nelson K.E."/>
            <person name="Fraser C.M."/>
        </authorList>
    </citation>
    <scope>NUCLEOTIDE SEQUENCE [LARGE SCALE GENOMIC DNA]</scope>
    <source>
        <strain>COL</strain>
    </source>
</reference>
<keyword id="KW-1003">Cell membrane</keyword>
<keyword id="KW-0472">Membrane</keyword>
<keyword id="KW-0812">Transmembrane</keyword>
<keyword id="KW-1133">Transmembrane helix</keyword>
<protein>
    <recommendedName>
        <fullName evidence="1">UPF0344 protein SACOL0974</fullName>
    </recommendedName>
</protein>
<gene>
    <name type="ordered locus">SACOL0974</name>
</gene>
<dbReference type="EMBL" id="CP000046">
    <property type="protein sequence ID" value="AAW37941.1"/>
    <property type="molecule type" value="Genomic_DNA"/>
</dbReference>
<dbReference type="RefSeq" id="WP_000902817.1">
    <property type="nucleotide sequence ID" value="NZ_JBGOFO010000002.1"/>
</dbReference>
<dbReference type="SMR" id="Q5HHB5"/>
<dbReference type="KEGG" id="sac:SACOL0974"/>
<dbReference type="HOGENOM" id="CLU_146641_2_0_9"/>
<dbReference type="Proteomes" id="UP000000530">
    <property type="component" value="Chromosome"/>
</dbReference>
<dbReference type="GO" id="GO:0005886">
    <property type="term" value="C:plasma membrane"/>
    <property type="evidence" value="ECO:0007669"/>
    <property type="project" value="UniProtKB-SubCell"/>
</dbReference>
<dbReference type="HAMAP" id="MF_01536">
    <property type="entry name" value="UPF0344"/>
    <property type="match status" value="1"/>
</dbReference>
<dbReference type="InterPro" id="IPR010899">
    <property type="entry name" value="UPF0344"/>
</dbReference>
<dbReference type="NCBIfam" id="NF010195">
    <property type="entry name" value="PRK13673.1-2"/>
    <property type="match status" value="1"/>
</dbReference>
<dbReference type="NCBIfam" id="NF010199">
    <property type="entry name" value="PRK13673.1-6"/>
    <property type="match status" value="1"/>
</dbReference>
<dbReference type="Pfam" id="PF07457">
    <property type="entry name" value="DUF1516"/>
    <property type="match status" value="1"/>
</dbReference>